<sequence length="92" mass="9847">MANSAQARKRARQAAKANSHNSALRSKFRTAIKAVRKAIDAGDQAKAAELFKAATKTIDTIADKKIVHKNKAARHKSRLSAAVKGLQAQAAQ</sequence>
<evidence type="ECO:0000255" key="1">
    <source>
        <dbReference type="HAMAP-Rule" id="MF_00500"/>
    </source>
</evidence>
<evidence type="ECO:0000256" key="2">
    <source>
        <dbReference type="SAM" id="MobiDB-lite"/>
    </source>
</evidence>
<evidence type="ECO:0000305" key="3"/>
<keyword id="KW-0687">Ribonucleoprotein</keyword>
<keyword id="KW-0689">Ribosomal protein</keyword>
<keyword id="KW-0694">RNA-binding</keyword>
<keyword id="KW-0699">rRNA-binding</keyword>
<gene>
    <name evidence="1" type="primary">rpsT</name>
    <name type="ordered locus">BURPS1106A_0923</name>
</gene>
<name>RS20_BURP0</name>
<dbReference type="EMBL" id="CP000572">
    <property type="protein sequence ID" value="ABN90399.1"/>
    <property type="molecule type" value="Genomic_DNA"/>
</dbReference>
<dbReference type="RefSeq" id="WP_004189743.1">
    <property type="nucleotide sequence ID" value="NC_009076.1"/>
</dbReference>
<dbReference type="SMR" id="A3NS83"/>
<dbReference type="GeneID" id="93059378"/>
<dbReference type="KEGG" id="bpl:BURPS1106A_0923"/>
<dbReference type="HOGENOM" id="CLU_160655_4_0_4"/>
<dbReference type="Proteomes" id="UP000006738">
    <property type="component" value="Chromosome I"/>
</dbReference>
<dbReference type="GO" id="GO:0005829">
    <property type="term" value="C:cytosol"/>
    <property type="evidence" value="ECO:0007669"/>
    <property type="project" value="TreeGrafter"/>
</dbReference>
<dbReference type="GO" id="GO:0015935">
    <property type="term" value="C:small ribosomal subunit"/>
    <property type="evidence" value="ECO:0007669"/>
    <property type="project" value="TreeGrafter"/>
</dbReference>
<dbReference type="GO" id="GO:0070181">
    <property type="term" value="F:small ribosomal subunit rRNA binding"/>
    <property type="evidence" value="ECO:0007669"/>
    <property type="project" value="TreeGrafter"/>
</dbReference>
<dbReference type="GO" id="GO:0003735">
    <property type="term" value="F:structural constituent of ribosome"/>
    <property type="evidence" value="ECO:0007669"/>
    <property type="project" value="InterPro"/>
</dbReference>
<dbReference type="GO" id="GO:0006412">
    <property type="term" value="P:translation"/>
    <property type="evidence" value="ECO:0007669"/>
    <property type="project" value="UniProtKB-UniRule"/>
</dbReference>
<dbReference type="FunFam" id="1.20.58.110:FF:000001">
    <property type="entry name" value="30S ribosomal protein S20"/>
    <property type="match status" value="1"/>
</dbReference>
<dbReference type="Gene3D" id="1.20.58.110">
    <property type="entry name" value="Ribosomal protein S20"/>
    <property type="match status" value="1"/>
</dbReference>
<dbReference type="HAMAP" id="MF_00500">
    <property type="entry name" value="Ribosomal_bS20"/>
    <property type="match status" value="1"/>
</dbReference>
<dbReference type="InterPro" id="IPR002583">
    <property type="entry name" value="Ribosomal_bS20"/>
</dbReference>
<dbReference type="InterPro" id="IPR036510">
    <property type="entry name" value="Ribosomal_bS20_sf"/>
</dbReference>
<dbReference type="NCBIfam" id="TIGR00029">
    <property type="entry name" value="S20"/>
    <property type="match status" value="1"/>
</dbReference>
<dbReference type="PANTHER" id="PTHR33398">
    <property type="entry name" value="30S RIBOSOMAL PROTEIN S20"/>
    <property type="match status" value="1"/>
</dbReference>
<dbReference type="PANTHER" id="PTHR33398:SF1">
    <property type="entry name" value="SMALL RIBOSOMAL SUBUNIT PROTEIN BS20C"/>
    <property type="match status" value="1"/>
</dbReference>
<dbReference type="Pfam" id="PF01649">
    <property type="entry name" value="Ribosomal_S20p"/>
    <property type="match status" value="1"/>
</dbReference>
<dbReference type="SUPFAM" id="SSF46992">
    <property type="entry name" value="Ribosomal protein S20"/>
    <property type="match status" value="1"/>
</dbReference>
<organism>
    <name type="scientific">Burkholderia pseudomallei (strain 1106a)</name>
    <dbReference type="NCBI Taxonomy" id="357348"/>
    <lineage>
        <taxon>Bacteria</taxon>
        <taxon>Pseudomonadati</taxon>
        <taxon>Pseudomonadota</taxon>
        <taxon>Betaproteobacteria</taxon>
        <taxon>Burkholderiales</taxon>
        <taxon>Burkholderiaceae</taxon>
        <taxon>Burkholderia</taxon>
        <taxon>pseudomallei group</taxon>
    </lineage>
</organism>
<reference key="1">
    <citation type="journal article" date="2010" name="Genome Biol. Evol.">
        <title>Continuing evolution of Burkholderia mallei through genome reduction and large-scale rearrangements.</title>
        <authorList>
            <person name="Losada L."/>
            <person name="Ronning C.M."/>
            <person name="DeShazer D."/>
            <person name="Woods D."/>
            <person name="Fedorova N."/>
            <person name="Kim H.S."/>
            <person name="Shabalina S.A."/>
            <person name="Pearson T.R."/>
            <person name="Brinkac L."/>
            <person name="Tan P."/>
            <person name="Nandi T."/>
            <person name="Crabtree J."/>
            <person name="Badger J."/>
            <person name="Beckstrom-Sternberg S."/>
            <person name="Saqib M."/>
            <person name="Schutzer S.E."/>
            <person name="Keim P."/>
            <person name="Nierman W.C."/>
        </authorList>
    </citation>
    <scope>NUCLEOTIDE SEQUENCE [LARGE SCALE GENOMIC DNA]</scope>
    <source>
        <strain>1106a</strain>
    </source>
</reference>
<comment type="function">
    <text evidence="1">Binds directly to 16S ribosomal RNA.</text>
</comment>
<comment type="similarity">
    <text evidence="1">Belongs to the bacterial ribosomal protein bS20 family.</text>
</comment>
<feature type="chain" id="PRO_1000014560" description="Small ribosomal subunit protein bS20">
    <location>
        <begin position="1"/>
        <end position="92"/>
    </location>
</feature>
<feature type="region of interest" description="Disordered" evidence="2">
    <location>
        <begin position="1"/>
        <end position="25"/>
    </location>
</feature>
<proteinExistence type="inferred from homology"/>
<accession>A3NS83</accession>
<protein>
    <recommendedName>
        <fullName evidence="1">Small ribosomal subunit protein bS20</fullName>
    </recommendedName>
    <alternativeName>
        <fullName evidence="3">30S ribosomal protein S20</fullName>
    </alternativeName>
</protein>